<protein>
    <recommendedName>
        <fullName>Transmembrane emp24 domain-containing protein 5</fullName>
    </recommendedName>
    <alternativeName>
        <fullName>p24 family protein gamma-2</fullName>
        <shortName>p24gamma2</shortName>
    </alternativeName>
</protein>
<dbReference type="EMBL" id="BC079452">
    <property type="protein sequence ID" value="AAH79452.1"/>
    <property type="molecule type" value="mRNA"/>
</dbReference>
<dbReference type="RefSeq" id="NP_001007620.1">
    <property type="nucleotide sequence ID" value="NM_001007619.1"/>
</dbReference>
<dbReference type="SMR" id="Q6AXN3"/>
<dbReference type="FunCoup" id="Q6AXN3">
    <property type="interactions" value="2640"/>
</dbReference>
<dbReference type="STRING" id="10116.ENSRNOP00000000083"/>
<dbReference type="PhosphoSitePlus" id="Q6AXN3"/>
<dbReference type="jPOST" id="Q6AXN3"/>
<dbReference type="PaxDb" id="10116-ENSRNOP00000000083"/>
<dbReference type="Ensembl" id="ENSRNOT00000119350.1">
    <property type="protein sequence ID" value="ENSRNOP00000084338.1"/>
    <property type="gene ID" value="ENSRNOG00000000073.7"/>
</dbReference>
<dbReference type="GeneID" id="289883"/>
<dbReference type="KEGG" id="rno:289883"/>
<dbReference type="UCSC" id="RGD:1359437">
    <property type="organism name" value="rat"/>
</dbReference>
<dbReference type="AGR" id="RGD:1359437"/>
<dbReference type="CTD" id="50999"/>
<dbReference type="RGD" id="1359437">
    <property type="gene designation" value="Tmed5"/>
</dbReference>
<dbReference type="eggNOG" id="KOG3287">
    <property type="taxonomic scope" value="Eukaryota"/>
</dbReference>
<dbReference type="GeneTree" id="ENSGT00940000155468"/>
<dbReference type="HOGENOM" id="CLU_066963_0_0_1"/>
<dbReference type="InParanoid" id="Q6AXN3"/>
<dbReference type="OrthoDB" id="60256at9989"/>
<dbReference type="Reactome" id="R-RNO-3238698">
    <property type="pathway name" value="WNT ligand biogenesis and trafficking"/>
</dbReference>
<dbReference type="PRO" id="PR:Q6AXN3"/>
<dbReference type="Proteomes" id="UP000002494">
    <property type="component" value="Chromosome 14"/>
</dbReference>
<dbReference type="GO" id="GO:0005801">
    <property type="term" value="C:cis-Golgi network"/>
    <property type="evidence" value="ECO:0000250"/>
    <property type="project" value="UniProtKB"/>
</dbReference>
<dbReference type="GO" id="GO:0030134">
    <property type="term" value="C:COPII-coated ER to Golgi transport vesicle"/>
    <property type="evidence" value="ECO:0000318"/>
    <property type="project" value="GO_Central"/>
</dbReference>
<dbReference type="GO" id="GO:0005783">
    <property type="term" value="C:endoplasmic reticulum"/>
    <property type="evidence" value="ECO:0000318"/>
    <property type="project" value="GO_Central"/>
</dbReference>
<dbReference type="GO" id="GO:0070971">
    <property type="term" value="C:endoplasmic reticulum exit site"/>
    <property type="evidence" value="ECO:0000250"/>
    <property type="project" value="UniProtKB"/>
</dbReference>
<dbReference type="GO" id="GO:0005789">
    <property type="term" value="C:endoplasmic reticulum membrane"/>
    <property type="evidence" value="ECO:0007669"/>
    <property type="project" value="UniProtKB-SubCell"/>
</dbReference>
<dbReference type="GO" id="GO:0005793">
    <property type="term" value="C:endoplasmic reticulum-Golgi intermediate compartment"/>
    <property type="evidence" value="ECO:0000250"/>
    <property type="project" value="UniProtKB"/>
</dbReference>
<dbReference type="GO" id="GO:0033116">
    <property type="term" value="C:endoplasmic reticulum-Golgi intermediate compartment membrane"/>
    <property type="evidence" value="ECO:0007669"/>
    <property type="project" value="UniProtKB-SubCell"/>
</dbReference>
<dbReference type="GO" id="GO:0005794">
    <property type="term" value="C:Golgi apparatus"/>
    <property type="evidence" value="ECO:0000318"/>
    <property type="project" value="GO_Central"/>
</dbReference>
<dbReference type="GO" id="GO:0006888">
    <property type="term" value="P:endoplasmic reticulum to Golgi vesicle-mediated transport"/>
    <property type="evidence" value="ECO:0000318"/>
    <property type="project" value="GO_Central"/>
</dbReference>
<dbReference type="GO" id="GO:0090161">
    <property type="term" value="P:Golgi ribbon formation"/>
    <property type="evidence" value="ECO:0000250"/>
    <property type="project" value="UniProtKB"/>
</dbReference>
<dbReference type="GO" id="GO:0006886">
    <property type="term" value="P:intracellular protein transport"/>
    <property type="evidence" value="ECO:0000318"/>
    <property type="project" value="GO_Central"/>
</dbReference>
<dbReference type="InterPro" id="IPR015720">
    <property type="entry name" value="Emp24-like"/>
</dbReference>
<dbReference type="InterPro" id="IPR009038">
    <property type="entry name" value="GOLD_dom"/>
</dbReference>
<dbReference type="InterPro" id="IPR036598">
    <property type="entry name" value="GOLD_dom_sf"/>
</dbReference>
<dbReference type="PANTHER" id="PTHR22811">
    <property type="entry name" value="TRANSMEMBRANE EMP24 DOMAIN-CONTAINING PROTEIN"/>
    <property type="match status" value="1"/>
</dbReference>
<dbReference type="Pfam" id="PF01105">
    <property type="entry name" value="EMP24_GP25L"/>
    <property type="match status" value="1"/>
</dbReference>
<dbReference type="SMART" id="SM01190">
    <property type="entry name" value="EMP24_GP25L"/>
    <property type="match status" value="1"/>
</dbReference>
<dbReference type="SUPFAM" id="SSF101576">
    <property type="entry name" value="Supernatant protein factor (SPF), C-terminal domain"/>
    <property type="match status" value="1"/>
</dbReference>
<dbReference type="PROSITE" id="PS50866">
    <property type="entry name" value="GOLD"/>
    <property type="match status" value="1"/>
</dbReference>
<gene>
    <name type="primary">Tmed5</name>
</gene>
<name>TMED5_RAT</name>
<evidence type="ECO:0000250" key="1"/>
<evidence type="ECO:0000255" key="2"/>
<evidence type="ECO:0000255" key="3">
    <source>
        <dbReference type="PROSITE-ProRule" id="PRU00096"/>
    </source>
</evidence>
<evidence type="ECO:0000305" key="4"/>
<comment type="function">
    <text evidence="1">Potential role in vesicular protein trafficking, mainly in the early secretory pathway. Required for the maintenance of the Golgi apparatus; involved in protein exchange between Golgi stacks during assembly. Probably not required for COPI-vesicle-mediated retrograde transport (By similarity).</text>
</comment>
<comment type="subunit">
    <text evidence="1">Interacts with TMED9 and TMED10.</text>
</comment>
<comment type="subcellular location">
    <subcellularLocation>
        <location evidence="1">Endoplasmic reticulum membrane</location>
        <topology evidence="1">Single-pass type I membrane protein</topology>
    </subcellularLocation>
    <subcellularLocation>
        <location evidence="1">Golgi apparatus</location>
        <location evidence="1">cis-Golgi network membrane</location>
        <topology evidence="1">Single-pass type I membrane protein</topology>
    </subcellularLocation>
    <subcellularLocation>
        <location evidence="1">Endoplasmic reticulum-Golgi intermediate compartment membrane</location>
        <topology evidence="1">Single-pass type I membrane protein</topology>
    </subcellularLocation>
    <text evidence="1">Probably cycles between compartments of the early secretatory pathway.</text>
</comment>
<comment type="similarity">
    <text evidence="4">Belongs to the EMP24/GP25L family.</text>
</comment>
<sequence length="229" mass="26136">MGVRMWLPFPMLLLSALPATLLSGAAGFTPSLDSDFTFTLPAGQKECFYQPMPLKASLEIEYQVLDGGELDIDFHLASPEGRTLVFEQRKSDGVHTVETEDGDYMFCFDNTFSTISEKVIFFELILDNMGEEVEGQEDWKKYITNTDVLEMKLEDILESINSIKSRLSKSGHIQTLLRAFEARDRNIQESNFDRVNFWSVVNLMVMVVVSAIQVYTLKSLFEDKRKSRT</sequence>
<accession>Q6AXN3</accession>
<reference key="1">
    <citation type="journal article" date="2004" name="Genome Res.">
        <title>The status, quality, and expansion of the NIH full-length cDNA project: the Mammalian Gene Collection (MGC).</title>
        <authorList>
            <consortium name="The MGC Project Team"/>
        </authorList>
    </citation>
    <scope>NUCLEOTIDE SEQUENCE [LARGE SCALE MRNA]</scope>
    <source>
        <tissue>Lung</tissue>
    </source>
</reference>
<keyword id="KW-0256">Endoplasmic reticulum</keyword>
<keyword id="KW-0333">Golgi apparatus</keyword>
<keyword id="KW-0472">Membrane</keyword>
<keyword id="KW-0653">Protein transport</keyword>
<keyword id="KW-1185">Reference proteome</keyword>
<keyword id="KW-0732">Signal</keyword>
<keyword id="KW-0812">Transmembrane</keyword>
<keyword id="KW-1133">Transmembrane helix</keyword>
<keyword id="KW-0813">Transport</keyword>
<organism>
    <name type="scientific">Rattus norvegicus</name>
    <name type="common">Rat</name>
    <dbReference type="NCBI Taxonomy" id="10116"/>
    <lineage>
        <taxon>Eukaryota</taxon>
        <taxon>Metazoa</taxon>
        <taxon>Chordata</taxon>
        <taxon>Craniata</taxon>
        <taxon>Vertebrata</taxon>
        <taxon>Euteleostomi</taxon>
        <taxon>Mammalia</taxon>
        <taxon>Eutheria</taxon>
        <taxon>Euarchontoglires</taxon>
        <taxon>Glires</taxon>
        <taxon>Rodentia</taxon>
        <taxon>Myomorpha</taxon>
        <taxon>Muroidea</taxon>
        <taxon>Muridae</taxon>
        <taxon>Murinae</taxon>
        <taxon>Rattus</taxon>
    </lineage>
</organism>
<proteinExistence type="evidence at transcript level"/>
<feature type="signal peptide" evidence="2">
    <location>
        <begin position="1"/>
        <end position="27"/>
    </location>
</feature>
<feature type="chain" id="PRO_0000010392" description="Transmembrane emp24 domain-containing protein 5">
    <location>
        <begin position="28"/>
        <end position="229"/>
    </location>
</feature>
<feature type="topological domain" description="Lumenal" evidence="2">
    <location>
        <begin position="28"/>
        <end position="196"/>
    </location>
</feature>
<feature type="transmembrane region" description="Helical" evidence="2">
    <location>
        <begin position="197"/>
        <end position="217"/>
    </location>
</feature>
<feature type="topological domain" description="Cytoplasmic" evidence="2">
    <location>
        <begin position="218"/>
        <end position="229"/>
    </location>
</feature>
<feature type="domain" description="GOLD" evidence="3">
    <location>
        <begin position="45"/>
        <end position="126"/>
    </location>
</feature>